<reference key="1">
    <citation type="journal article" date="2006" name="J. Bacteriol.">
        <title>Chromosome rearrangement and diversification of Francisella tularensis revealed by the type B (OSU18) genome sequence.</title>
        <authorList>
            <person name="Petrosino J.F."/>
            <person name="Xiang Q."/>
            <person name="Karpathy S.E."/>
            <person name="Jiang H."/>
            <person name="Yerrapragada S."/>
            <person name="Liu Y."/>
            <person name="Gioia J."/>
            <person name="Hemphill L."/>
            <person name="Gonzalez A."/>
            <person name="Raghavan T.M."/>
            <person name="Uzman A."/>
            <person name="Fox G.E."/>
            <person name="Highlander S."/>
            <person name="Reichard M."/>
            <person name="Morton R.J."/>
            <person name="Clinkenbeard K.D."/>
            <person name="Weinstock G.M."/>
        </authorList>
    </citation>
    <scope>NUCLEOTIDE SEQUENCE [LARGE SCALE GENOMIC DNA]</scope>
    <source>
        <strain>OSU18</strain>
    </source>
</reference>
<accession>Q0BM50</accession>
<protein>
    <recommendedName>
        <fullName evidence="1">Large ribosomal subunit protein bL25</fullName>
    </recommendedName>
    <alternativeName>
        <fullName evidence="2">50S ribosomal protein L25</fullName>
    </alternativeName>
</protein>
<proteinExistence type="inferred from homology"/>
<dbReference type="EMBL" id="CP000437">
    <property type="protein sequence ID" value="ABI82834.1"/>
    <property type="molecule type" value="Genomic_DNA"/>
</dbReference>
<dbReference type="RefSeq" id="WP_003015742.1">
    <property type="nucleotide sequence ID" value="NC_017463.1"/>
</dbReference>
<dbReference type="SMR" id="Q0BM50"/>
<dbReference type="KEGG" id="fth:FTH_0928"/>
<dbReference type="GO" id="GO:0022625">
    <property type="term" value="C:cytosolic large ribosomal subunit"/>
    <property type="evidence" value="ECO:0007669"/>
    <property type="project" value="TreeGrafter"/>
</dbReference>
<dbReference type="GO" id="GO:0008097">
    <property type="term" value="F:5S rRNA binding"/>
    <property type="evidence" value="ECO:0007669"/>
    <property type="project" value="InterPro"/>
</dbReference>
<dbReference type="GO" id="GO:0003735">
    <property type="term" value="F:structural constituent of ribosome"/>
    <property type="evidence" value="ECO:0007669"/>
    <property type="project" value="InterPro"/>
</dbReference>
<dbReference type="GO" id="GO:0006412">
    <property type="term" value="P:translation"/>
    <property type="evidence" value="ECO:0007669"/>
    <property type="project" value="UniProtKB-UniRule"/>
</dbReference>
<dbReference type="CDD" id="cd00495">
    <property type="entry name" value="Ribosomal_L25_TL5_CTC"/>
    <property type="match status" value="1"/>
</dbReference>
<dbReference type="FunFam" id="2.40.240.10:FF:000002">
    <property type="entry name" value="50S ribosomal protein L25"/>
    <property type="match status" value="1"/>
</dbReference>
<dbReference type="Gene3D" id="2.40.240.10">
    <property type="entry name" value="Ribosomal Protein L25, Chain P"/>
    <property type="match status" value="1"/>
</dbReference>
<dbReference type="HAMAP" id="MF_01336">
    <property type="entry name" value="Ribosomal_bL25"/>
    <property type="match status" value="1"/>
</dbReference>
<dbReference type="InterPro" id="IPR020056">
    <property type="entry name" value="Rbsml_bL25/Gln-tRNA_synth_N"/>
</dbReference>
<dbReference type="InterPro" id="IPR011035">
    <property type="entry name" value="Ribosomal_bL25/Gln-tRNA_synth"/>
</dbReference>
<dbReference type="InterPro" id="IPR001021">
    <property type="entry name" value="Ribosomal_bL25_long"/>
</dbReference>
<dbReference type="InterPro" id="IPR020055">
    <property type="entry name" value="Ribosomal_bL25_short"/>
</dbReference>
<dbReference type="InterPro" id="IPR029751">
    <property type="entry name" value="Ribosomal_L25_dom"/>
</dbReference>
<dbReference type="InterPro" id="IPR020930">
    <property type="entry name" value="Ribosomal_uL5_bac-type"/>
</dbReference>
<dbReference type="NCBIfam" id="TIGR00731">
    <property type="entry name" value="bL25_bact_ctc"/>
    <property type="match status" value="1"/>
</dbReference>
<dbReference type="NCBIfam" id="NF004612">
    <property type="entry name" value="PRK05943.1"/>
    <property type="match status" value="1"/>
</dbReference>
<dbReference type="PANTHER" id="PTHR33284">
    <property type="entry name" value="RIBOSOMAL PROTEIN L25/GLN-TRNA SYNTHETASE, ANTI-CODON-BINDING DOMAIN-CONTAINING PROTEIN"/>
    <property type="match status" value="1"/>
</dbReference>
<dbReference type="PANTHER" id="PTHR33284:SF1">
    <property type="entry name" value="RIBOSOMAL PROTEIN L25_GLN-TRNA SYNTHETASE, ANTI-CODON-BINDING DOMAIN-CONTAINING PROTEIN"/>
    <property type="match status" value="1"/>
</dbReference>
<dbReference type="Pfam" id="PF01386">
    <property type="entry name" value="Ribosomal_L25p"/>
    <property type="match status" value="1"/>
</dbReference>
<dbReference type="SUPFAM" id="SSF50715">
    <property type="entry name" value="Ribosomal protein L25-like"/>
    <property type="match status" value="1"/>
</dbReference>
<sequence>MANFVLKAEKREDLGTGASRRLRRAGKIPAVIYGGEKEAVSVLLDHDKVLHSTEDKEFFSSEITLDIDGKQEKVIIKALQRHPYKVKLIHADFMRV</sequence>
<comment type="function">
    <text evidence="1">This is one of the proteins that binds to the 5S RNA in the ribosome where it forms part of the central protuberance.</text>
</comment>
<comment type="subunit">
    <text evidence="1">Part of the 50S ribosomal subunit; part of the 5S rRNA/L5/L18/L25 subcomplex. Contacts the 5S rRNA. Binds to the 5S rRNA independently of L5 and L18.</text>
</comment>
<comment type="similarity">
    <text evidence="1">Belongs to the bacterial ribosomal protein bL25 family.</text>
</comment>
<name>RL25_FRATO</name>
<gene>
    <name evidence="1" type="primary">rplY</name>
    <name type="ordered locus">FTH_0928</name>
</gene>
<organism>
    <name type="scientific">Francisella tularensis subsp. holarctica (strain OSU18)</name>
    <dbReference type="NCBI Taxonomy" id="393011"/>
    <lineage>
        <taxon>Bacteria</taxon>
        <taxon>Pseudomonadati</taxon>
        <taxon>Pseudomonadota</taxon>
        <taxon>Gammaproteobacteria</taxon>
        <taxon>Thiotrichales</taxon>
        <taxon>Francisellaceae</taxon>
        <taxon>Francisella</taxon>
    </lineage>
</organism>
<keyword id="KW-0687">Ribonucleoprotein</keyword>
<keyword id="KW-0689">Ribosomal protein</keyword>
<keyword id="KW-0694">RNA-binding</keyword>
<keyword id="KW-0699">rRNA-binding</keyword>
<feature type="chain" id="PRO_1000052955" description="Large ribosomal subunit protein bL25">
    <location>
        <begin position="1"/>
        <end position="96"/>
    </location>
</feature>
<evidence type="ECO:0000255" key="1">
    <source>
        <dbReference type="HAMAP-Rule" id="MF_01336"/>
    </source>
</evidence>
<evidence type="ECO:0000305" key="2"/>